<name>SECE_SALTI</name>
<sequence>MSANTEAQGSGRGLEAMKWIVVAILLIVAIVGNYLYRDMMLPLRALAVVILIAAAGGVALLTTKGKATVAFAREARTEVRKVIWPTRQETLHTTLIVAAVTAVMSLILWGLDGILVRLVSFITGLRF</sequence>
<proteinExistence type="inferred from homology"/>
<evidence type="ECO:0000255" key="1">
    <source>
        <dbReference type="HAMAP-Rule" id="MF_00422"/>
    </source>
</evidence>
<dbReference type="EMBL" id="AL513382">
    <property type="protein sequence ID" value="CAD09493.1"/>
    <property type="molecule type" value="Genomic_DNA"/>
</dbReference>
<dbReference type="EMBL" id="AE014613">
    <property type="protein sequence ID" value="AAO70996.1"/>
    <property type="molecule type" value="Genomic_DNA"/>
</dbReference>
<dbReference type="RefSeq" id="NP_457923.1">
    <property type="nucleotide sequence ID" value="NC_003198.1"/>
</dbReference>
<dbReference type="RefSeq" id="WP_001275691.1">
    <property type="nucleotide sequence ID" value="NZ_WSUR01000043.1"/>
</dbReference>
<dbReference type="STRING" id="220341.gene:17587594"/>
<dbReference type="KEGG" id="stt:t3480"/>
<dbReference type="KEGG" id="sty:STY3738"/>
<dbReference type="PATRIC" id="fig|220341.7.peg.3811"/>
<dbReference type="eggNOG" id="COG0690">
    <property type="taxonomic scope" value="Bacteria"/>
</dbReference>
<dbReference type="HOGENOM" id="CLU_113663_0_1_6"/>
<dbReference type="OMA" id="AQESRFD"/>
<dbReference type="OrthoDB" id="9806365at2"/>
<dbReference type="Proteomes" id="UP000000541">
    <property type="component" value="Chromosome"/>
</dbReference>
<dbReference type="Proteomes" id="UP000002670">
    <property type="component" value="Chromosome"/>
</dbReference>
<dbReference type="GO" id="GO:0005886">
    <property type="term" value="C:plasma membrane"/>
    <property type="evidence" value="ECO:0007669"/>
    <property type="project" value="UniProtKB-SubCell"/>
</dbReference>
<dbReference type="GO" id="GO:0008320">
    <property type="term" value="F:protein transmembrane transporter activity"/>
    <property type="evidence" value="ECO:0007669"/>
    <property type="project" value="UniProtKB-UniRule"/>
</dbReference>
<dbReference type="GO" id="GO:0065002">
    <property type="term" value="P:intracellular protein transmembrane transport"/>
    <property type="evidence" value="ECO:0007669"/>
    <property type="project" value="UniProtKB-UniRule"/>
</dbReference>
<dbReference type="GO" id="GO:0009306">
    <property type="term" value="P:protein secretion"/>
    <property type="evidence" value="ECO:0007669"/>
    <property type="project" value="UniProtKB-UniRule"/>
</dbReference>
<dbReference type="GO" id="GO:0006605">
    <property type="term" value="P:protein targeting"/>
    <property type="evidence" value="ECO:0007669"/>
    <property type="project" value="UniProtKB-UniRule"/>
</dbReference>
<dbReference type="GO" id="GO:0043952">
    <property type="term" value="P:protein transport by the Sec complex"/>
    <property type="evidence" value="ECO:0007669"/>
    <property type="project" value="UniProtKB-UniRule"/>
</dbReference>
<dbReference type="FunFam" id="1.20.5.1030:FF:000001">
    <property type="entry name" value="Preprotein translocase subunit SecE"/>
    <property type="match status" value="1"/>
</dbReference>
<dbReference type="Gene3D" id="1.20.5.1030">
    <property type="entry name" value="Preprotein translocase secy subunit"/>
    <property type="match status" value="1"/>
</dbReference>
<dbReference type="HAMAP" id="MF_00422">
    <property type="entry name" value="SecE"/>
    <property type="match status" value="1"/>
</dbReference>
<dbReference type="InterPro" id="IPR005807">
    <property type="entry name" value="SecE_bac"/>
</dbReference>
<dbReference type="InterPro" id="IPR038379">
    <property type="entry name" value="SecE_sf"/>
</dbReference>
<dbReference type="InterPro" id="IPR001901">
    <property type="entry name" value="Translocase_SecE/Sec61-g"/>
</dbReference>
<dbReference type="NCBIfam" id="NF004372">
    <property type="entry name" value="PRK05740.1-2"/>
    <property type="match status" value="1"/>
</dbReference>
<dbReference type="NCBIfam" id="NF004374">
    <property type="entry name" value="PRK05740.1-5"/>
    <property type="match status" value="1"/>
</dbReference>
<dbReference type="NCBIfam" id="TIGR00964">
    <property type="entry name" value="secE_bact"/>
    <property type="match status" value="1"/>
</dbReference>
<dbReference type="PANTHER" id="PTHR33910">
    <property type="entry name" value="PROTEIN TRANSLOCASE SUBUNIT SECE"/>
    <property type="match status" value="1"/>
</dbReference>
<dbReference type="PANTHER" id="PTHR33910:SF1">
    <property type="entry name" value="PROTEIN TRANSLOCASE SUBUNIT SECE"/>
    <property type="match status" value="1"/>
</dbReference>
<dbReference type="Pfam" id="PF00584">
    <property type="entry name" value="SecE"/>
    <property type="match status" value="1"/>
</dbReference>
<dbReference type="PRINTS" id="PR01650">
    <property type="entry name" value="SECETRNLCASE"/>
</dbReference>
<dbReference type="PROSITE" id="PS01067">
    <property type="entry name" value="SECE_SEC61G"/>
    <property type="match status" value="1"/>
</dbReference>
<organism>
    <name type="scientific">Salmonella typhi</name>
    <dbReference type="NCBI Taxonomy" id="90370"/>
    <lineage>
        <taxon>Bacteria</taxon>
        <taxon>Pseudomonadati</taxon>
        <taxon>Pseudomonadota</taxon>
        <taxon>Gammaproteobacteria</taxon>
        <taxon>Enterobacterales</taxon>
        <taxon>Enterobacteriaceae</taxon>
        <taxon>Salmonella</taxon>
    </lineage>
</organism>
<gene>
    <name evidence="1" type="primary">secE</name>
    <name type="ordered locus">STY3738</name>
    <name type="ordered locus">t3480</name>
</gene>
<accession>P0A2D4</accession>
<accession>Q9L9K1</accession>
<comment type="function">
    <text evidence="1">Essential subunit of the Sec protein translocation channel SecYEG. Clamps together the 2 halves of SecY. May contact the channel plug during translocation.</text>
</comment>
<comment type="subunit">
    <text evidence="1">Component of the Sec protein translocase complex. Heterotrimer consisting of SecY, SecE and SecG subunits. The heterotrimers can form oligomers, although 1 heterotrimer is thought to be able to translocate proteins. Interacts with the ribosome. Interacts with SecDF, and other proteins may be involved. Interacts with SecA.</text>
</comment>
<comment type="subcellular location">
    <subcellularLocation>
        <location evidence="1">Cell inner membrane</location>
        <topology evidence="1">Multi-pass membrane protein</topology>
    </subcellularLocation>
</comment>
<comment type="similarity">
    <text evidence="1">Belongs to the SecE/SEC61-gamma family.</text>
</comment>
<feature type="chain" id="PRO_0000104171" description="Protein translocase subunit SecE">
    <location>
        <begin position="1"/>
        <end position="127"/>
    </location>
</feature>
<feature type="transmembrane region" description="Helical" evidence="1">
    <location>
        <begin position="16"/>
        <end position="36"/>
    </location>
</feature>
<feature type="transmembrane region" description="Helical" evidence="1">
    <location>
        <begin position="41"/>
        <end position="61"/>
    </location>
</feature>
<feature type="transmembrane region" description="Helical" evidence="1">
    <location>
        <begin position="96"/>
        <end position="116"/>
    </location>
</feature>
<keyword id="KW-0997">Cell inner membrane</keyword>
<keyword id="KW-1003">Cell membrane</keyword>
<keyword id="KW-0472">Membrane</keyword>
<keyword id="KW-0653">Protein transport</keyword>
<keyword id="KW-0811">Translocation</keyword>
<keyword id="KW-0812">Transmembrane</keyword>
<keyword id="KW-1133">Transmembrane helix</keyword>
<keyword id="KW-0813">Transport</keyword>
<protein>
    <recommendedName>
        <fullName evidence="1">Protein translocase subunit SecE</fullName>
    </recommendedName>
</protein>
<reference key="1">
    <citation type="journal article" date="2001" name="Nature">
        <title>Complete genome sequence of a multiple drug resistant Salmonella enterica serovar Typhi CT18.</title>
        <authorList>
            <person name="Parkhill J."/>
            <person name="Dougan G."/>
            <person name="James K.D."/>
            <person name="Thomson N.R."/>
            <person name="Pickard D."/>
            <person name="Wain J."/>
            <person name="Churcher C.M."/>
            <person name="Mungall K.L."/>
            <person name="Bentley S.D."/>
            <person name="Holden M.T.G."/>
            <person name="Sebaihia M."/>
            <person name="Baker S."/>
            <person name="Basham D."/>
            <person name="Brooks K."/>
            <person name="Chillingworth T."/>
            <person name="Connerton P."/>
            <person name="Cronin A."/>
            <person name="Davis P."/>
            <person name="Davies R.M."/>
            <person name="Dowd L."/>
            <person name="White N."/>
            <person name="Farrar J."/>
            <person name="Feltwell T."/>
            <person name="Hamlin N."/>
            <person name="Haque A."/>
            <person name="Hien T.T."/>
            <person name="Holroyd S."/>
            <person name="Jagels K."/>
            <person name="Krogh A."/>
            <person name="Larsen T.S."/>
            <person name="Leather S."/>
            <person name="Moule S."/>
            <person name="O'Gaora P."/>
            <person name="Parry C."/>
            <person name="Quail M.A."/>
            <person name="Rutherford K.M."/>
            <person name="Simmonds M."/>
            <person name="Skelton J."/>
            <person name="Stevens K."/>
            <person name="Whitehead S."/>
            <person name="Barrell B.G."/>
        </authorList>
    </citation>
    <scope>NUCLEOTIDE SEQUENCE [LARGE SCALE GENOMIC DNA]</scope>
    <source>
        <strain>CT18</strain>
    </source>
</reference>
<reference key="2">
    <citation type="journal article" date="2003" name="J. Bacteriol.">
        <title>Comparative genomics of Salmonella enterica serovar Typhi strains Ty2 and CT18.</title>
        <authorList>
            <person name="Deng W."/>
            <person name="Liou S.-R."/>
            <person name="Plunkett G. III"/>
            <person name="Mayhew G.F."/>
            <person name="Rose D.J."/>
            <person name="Burland V."/>
            <person name="Kodoyianni V."/>
            <person name="Schwartz D.C."/>
            <person name="Blattner F.R."/>
        </authorList>
    </citation>
    <scope>NUCLEOTIDE SEQUENCE [LARGE SCALE GENOMIC DNA]</scope>
    <source>
        <strain>ATCC 700931 / Ty2</strain>
    </source>
</reference>